<accession>Q64XV2</accession>
<sequence>MKTILLFALSLLLSLSVSDVCAQERVYDISQFGLKANSKKNASPVVRKAIAKIKAECRDGEKVILRFPAGRYNFHEAGSTVREYYISNHDQDNPKKVGIALEDMKNLTIDGQGSEFVFYGRMIPVSLLRSENCVLKNFSIDFEQPHIAQVQVVENDPEKGITFEPAPWVDYRISKDSVFEGLGEGWVMRYSWGIAFDGKTKHVVYNTSDIGCPTKGAFEVAPRRICSPKWKDARLVPGTVVAMRGWGRPTPGIFMSHDVNTSLLDVKVHYAEGMGLLAQLCEDITLDGFGVCLKGNNDPRYFTTQADATHFSGCKGKIVSKNGLYEGMMDDAINVHGTYLKVIKRVDDHTLIGRYMHDQSWGFEWGRPGDDVQFVRSETMELIGKQNQITAIRPYDKGEIQGAREFSITFKEAIDPAINEKSGFGIENLTWTPEVLFAGNTIRNNRARGTLFSTPKKTVVEDNLFDHTSGTAILLCGDCNGWFETGACRDVTIRRNRFINALTNMFQFTNAVISIYPEIPNLKDQQKYFHGGKDGGIVIEDNEFDTFDAPILYAKSVDGLIFRNNVIKTNTEFKPFHWNKDRFLLERVTNVKISE</sequence>
<keyword id="KW-0326">Glycosidase</keyword>
<keyword id="KW-0378">Hydrolase</keyword>
<keyword id="KW-0677">Repeat</keyword>
<keyword id="KW-0732">Signal</keyword>
<feature type="signal peptide" evidence="2">
    <location>
        <begin position="1"/>
        <end position="22"/>
    </location>
</feature>
<feature type="chain" id="PRO_0000348477" description="Alpha-1,3-galactosidase B">
    <location>
        <begin position="23"/>
        <end position="595"/>
    </location>
</feature>
<feature type="repeat" description="PbH1 1">
    <location>
        <begin position="432"/>
        <end position="454"/>
    </location>
</feature>
<feature type="repeat" description="PbH1 2">
    <location>
        <begin position="455"/>
        <end position="477"/>
    </location>
</feature>
<feature type="repeat" description="PbH1 3">
    <location>
        <begin position="488"/>
        <end position="541"/>
    </location>
</feature>
<reference key="1">
    <citation type="journal article" date="2004" name="Proc. Natl. Acad. Sci. U.S.A.">
        <title>Genomic analysis of Bacteroides fragilis reveals extensive DNA inversions regulating cell surface adaptation.</title>
        <authorList>
            <person name="Kuwahara T."/>
            <person name="Yamashita A."/>
            <person name="Hirakawa H."/>
            <person name="Nakayama H."/>
            <person name="Toh H."/>
            <person name="Okada N."/>
            <person name="Kuhara S."/>
            <person name="Hattori M."/>
            <person name="Hayashi T."/>
            <person name="Ohnishi Y."/>
        </authorList>
    </citation>
    <scope>NUCLEOTIDE SEQUENCE [LARGE SCALE GENOMIC DNA]</scope>
    <source>
        <strain>YCH46</strain>
    </source>
</reference>
<comment type="function">
    <text evidence="1">Alpha-galactosidase. Removes both branched alpha-1,3-linked galactose residues of blood group B antigens and linear alpha-1,3-linked galactose structures.</text>
</comment>
<comment type="catalytic activity">
    <reaction evidence="1">
        <text>Hydrolysis of terminal, non-reducing branched (1-&gt;3)-alpha-D-galactosidic residues, producing free D-galactose.</text>
        <dbReference type="EC" id="3.2.1.n1"/>
    </reaction>
</comment>
<comment type="catalytic activity">
    <reaction evidence="1">
        <text>Hydrolysis of terminal, non-reducing linear (1-&gt;3)-alpha-D-galactosidic residues, producing free D-galactose.</text>
        <dbReference type="EC" id="3.2.1.n2"/>
    </reaction>
</comment>
<comment type="catalytic activity">
    <reaction evidence="1">
        <text>Hydrolysis of terminal, non-reducing alpha-D-galactose residues in alpha-D-galactosides, including galactose oligosaccharides, galactomannans and galactolipids.</text>
        <dbReference type="EC" id="3.2.1.22"/>
    </reaction>
</comment>
<comment type="similarity">
    <text evidence="3">Belongs to the glycosyl hydrolase 110 family. B subfamily.</text>
</comment>
<gene>
    <name type="primary">glaB</name>
    <name type="ordered locus">BF0923</name>
</gene>
<proteinExistence type="inferred from homology"/>
<evidence type="ECO:0000250" key="1">
    <source>
        <dbReference type="UniProtKB" id="Q5LGZ8"/>
    </source>
</evidence>
<evidence type="ECO:0000255" key="2"/>
<evidence type="ECO:0000305" key="3"/>
<organism>
    <name type="scientific">Bacteroides fragilis (strain YCH46)</name>
    <dbReference type="NCBI Taxonomy" id="295405"/>
    <lineage>
        <taxon>Bacteria</taxon>
        <taxon>Pseudomonadati</taxon>
        <taxon>Bacteroidota</taxon>
        <taxon>Bacteroidia</taxon>
        <taxon>Bacteroidales</taxon>
        <taxon>Bacteroidaceae</taxon>
        <taxon>Bacteroides</taxon>
    </lineage>
</organism>
<protein>
    <recommendedName>
        <fullName>Alpha-1,3-galactosidase B</fullName>
        <ecNumber evidence="1">3.2.1.n1</ecNumber>
        <ecNumber evidence="1">3.2.1.n2</ecNumber>
    </recommendedName>
    <alternativeName>
        <fullName>Exo-alpha-galactosidase B</fullName>
        <ecNumber evidence="1">3.2.1.22</ecNumber>
    </alternativeName>
</protein>
<name>GLAB_BACFR</name>
<dbReference type="EC" id="3.2.1.n1" evidence="1"/>
<dbReference type="EC" id="3.2.1.n2" evidence="1"/>
<dbReference type="EC" id="3.2.1.22" evidence="1"/>
<dbReference type="EMBL" id="AP006841">
    <property type="protein sequence ID" value="BAD47674.1"/>
    <property type="molecule type" value="Genomic_DNA"/>
</dbReference>
<dbReference type="RefSeq" id="WP_011202199.1">
    <property type="nucleotide sequence ID" value="NC_006347.1"/>
</dbReference>
<dbReference type="RefSeq" id="YP_098208.1">
    <property type="nucleotide sequence ID" value="NC_006347.1"/>
</dbReference>
<dbReference type="SMR" id="Q64XV2"/>
<dbReference type="STRING" id="295405.BF0923"/>
<dbReference type="CAZy" id="GH110">
    <property type="family name" value="Glycoside Hydrolase Family 110"/>
</dbReference>
<dbReference type="KEGG" id="bfr:BF0923"/>
<dbReference type="PATRIC" id="fig|295405.11.peg.926"/>
<dbReference type="HOGENOM" id="CLU_017693_0_0_10"/>
<dbReference type="OrthoDB" id="9807299at2"/>
<dbReference type="Proteomes" id="UP000002197">
    <property type="component" value="Chromosome"/>
</dbReference>
<dbReference type="GO" id="GO:0004557">
    <property type="term" value="F:alpha-galactosidase activity"/>
    <property type="evidence" value="ECO:0007669"/>
    <property type="project" value="UniProtKB-EC"/>
</dbReference>
<dbReference type="Gene3D" id="2.160.20.10">
    <property type="entry name" value="Single-stranded right-handed beta-helix, Pectin lyase-like"/>
    <property type="match status" value="2"/>
</dbReference>
<dbReference type="InterPro" id="IPR056441">
    <property type="entry name" value="Beta-barrel_GLAA-B_II"/>
</dbReference>
<dbReference type="InterPro" id="IPR012334">
    <property type="entry name" value="Pectin_lyas_fold"/>
</dbReference>
<dbReference type="InterPro" id="IPR011050">
    <property type="entry name" value="Pectin_lyase_fold/virulence"/>
</dbReference>
<dbReference type="Pfam" id="PF23763">
    <property type="entry name" value="Beta-barrel_GLAA-B_I"/>
    <property type="match status" value="1"/>
</dbReference>
<dbReference type="Pfam" id="PF23764">
    <property type="entry name" value="Beta-barrel_GLAA-B_II"/>
    <property type="match status" value="1"/>
</dbReference>
<dbReference type="SUPFAM" id="SSF51126">
    <property type="entry name" value="Pectin lyase-like"/>
    <property type="match status" value="1"/>
</dbReference>